<comment type="function">
    <text evidence="1">Cell division inhibitor that blocks the formation of polar Z ring septums. Rapidly oscillates between the poles of the cell to destabilize FtsZ filaments that have formed before they mature into polar Z rings. Prevents FtsZ polymerization.</text>
</comment>
<comment type="subunit">
    <text evidence="1">Interacts with MinD and FtsZ.</text>
</comment>
<comment type="similarity">
    <text evidence="1">Belongs to the MinC family.</text>
</comment>
<keyword id="KW-0131">Cell cycle</keyword>
<keyword id="KW-0132">Cell division</keyword>
<keyword id="KW-0717">Septation</keyword>
<gene>
    <name evidence="1" type="primary">minC</name>
    <name type="ordered locus">KPK_1975</name>
</gene>
<organism>
    <name type="scientific">Klebsiella pneumoniae (strain 342)</name>
    <dbReference type="NCBI Taxonomy" id="507522"/>
    <lineage>
        <taxon>Bacteria</taxon>
        <taxon>Pseudomonadati</taxon>
        <taxon>Pseudomonadota</taxon>
        <taxon>Gammaproteobacteria</taxon>
        <taxon>Enterobacterales</taxon>
        <taxon>Enterobacteriaceae</taxon>
        <taxon>Klebsiella/Raoultella group</taxon>
        <taxon>Klebsiella</taxon>
        <taxon>Klebsiella pneumoniae complex</taxon>
    </lineage>
</organism>
<accession>B5XQ71</accession>
<sequence>MSNTPIELKGSSFTLSVVHLHDANPEVIRQALEDKIAQAPAFLRHAPVVVNIASVEEEVEWRAINEAIAATGLRIMGVSGCKIPRLKTEIDRAGIPLLTEGKEKAPRPAPSEPTPPPPPVANQITKTRLIDQPVRSGQRIYAPHCDLIVTNHVSAGAELIADGNIHVYGMMRGRALAGAGGDRDAQIFCTHLAAELVSIAGEYWLSDNIPAEFYGKAARLRLGESALTVQPLN</sequence>
<protein>
    <recommendedName>
        <fullName evidence="1">Probable septum site-determining protein MinC</fullName>
    </recommendedName>
</protein>
<feature type="chain" id="PRO_1000114284" description="Probable septum site-determining protein MinC">
    <location>
        <begin position="1"/>
        <end position="233"/>
    </location>
</feature>
<feature type="region of interest" description="Disordered" evidence="2">
    <location>
        <begin position="98"/>
        <end position="123"/>
    </location>
</feature>
<feature type="compositionally biased region" description="Pro residues" evidence="2">
    <location>
        <begin position="107"/>
        <end position="120"/>
    </location>
</feature>
<dbReference type="EMBL" id="CP000964">
    <property type="protein sequence ID" value="ACI09817.1"/>
    <property type="molecule type" value="Genomic_DNA"/>
</dbReference>
<dbReference type="SMR" id="B5XQ71"/>
<dbReference type="KEGG" id="kpe:KPK_1975"/>
<dbReference type="HOGENOM" id="CLU_067812_0_1_6"/>
<dbReference type="Proteomes" id="UP000001734">
    <property type="component" value="Chromosome"/>
</dbReference>
<dbReference type="GO" id="GO:0000902">
    <property type="term" value="P:cell morphogenesis"/>
    <property type="evidence" value="ECO:0007669"/>
    <property type="project" value="InterPro"/>
</dbReference>
<dbReference type="GO" id="GO:0000917">
    <property type="term" value="P:division septum assembly"/>
    <property type="evidence" value="ECO:0007669"/>
    <property type="project" value="UniProtKB-KW"/>
</dbReference>
<dbReference type="GO" id="GO:0051302">
    <property type="term" value="P:regulation of cell division"/>
    <property type="evidence" value="ECO:0007669"/>
    <property type="project" value="InterPro"/>
</dbReference>
<dbReference type="GO" id="GO:1901891">
    <property type="term" value="P:regulation of cell septum assembly"/>
    <property type="evidence" value="ECO:0007669"/>
    <property type="project" value="InterPro"/>
</dbReference>
<dbReference type="FunFam" id="2.160.20.70:FF:000002">
    <property type="entry name" value="Probable septum site-determining protein MinC"/>
    <property type="match status" value="1"/>
</dbReference>
<dbReference type="Gene3D" id="2.160.20.70">
    <property type="match status" value="1"/>
</dbReference>
<dbReference type="Gene3D" id="3.30.70.260">
    <property type="match status" value="1"/>
</dbReference>
<dbReference type="HAMAP" id="MF_00267">
    <property type="entry name" value="MinC"/>
    <property type="match status" value="1"/>
</dbReference>
<dbReference type="InterPro" id="IPR016098">
    <property type="entry name" value="CAP/MinC_C"/>
</dbReference>
<dbReference type="InterPro" id="IPR013033">
    <property type="entry name" value="MinC"/>
</dbReference>
<dbReference type="InterPro" id="IPR036145">
    <property type="entry name" value="MinC_C_sf"/>
</dbReference>
<dbReference type="InterPro" id="IPR007874">
    <property type="entry name" value="MinC_N"/>
</dbReference>
<dbReference type="InterPro" id="IPR005526">
    <property type="entry name" value="Septum_form_inhib_MinC_C"/>
</dbReference>
<dbReference type="NCBIfam" id="TIGR01222">
    <property type="entry name" value="minC"/>
    <property type="match status" value="1"/>
</dbReference>
<dbReference type="PANTHER" id="PTHR34108">
    <property type="entry name" value="SEPTUM SITE-DETERMINING PROTEIN MINC"/>
    <property type="match status" value="1"/>
</dbReference>
<dbReference type="PANTHER" id="PTHR34108:SF1">
    <property type="entry name" value="SEPTUM SITE-DETERMINING PROTEIN MINC"/>
    <property type="match status" value="1"/>
</dbReference>
<dbReference type="Pfam" id="PF03775">
    <property type="entry name" value="MinC_C"/>
    <property type="match status" value="1"/>
</dbReference>
<dbReference type="Pfam" id="PF05209">
    <property type="entry name" value="MinC_N"/>
    <property type="match status" value="1"/>
</dbReference>
<dbReference type="SUPFAM" id="SSF63848">
    <property type="entry name" value="Cell-division inhibitor MinC, C-terminal domain"/>
    <property type="match status" value="1"/>
</dbReference>
<evidence type="ECO:0000255" key="1">
    <source>
        <dbReference type="HAMAP-Rule" id="MF_00267"/>
    </source>
</evidence>
<evidence type="ECO:0000256" key="2">
    <source>
        <dbReference type="SAM" id="MobiDB-lite"/>
    </source>
</evidence>
<reference key="1">
    <citation type="journal article" date="2008" name="PLoS Genet.">
        <title>Complete genome sequence of the N2-fixing broad host range endophyte Klebsiella pneumoniae 342 and virulence predictions verified in mice.</title>
        <authorList>
            <person name="Fouts D.E."/>
            <person name="Tyler H.L."/>
            <person name="DeBoy R.T."/>
            <person name="Daugherty S."/>
            <person name="Ren Q."/>
            <person name="Badger J.H."/>
            <person name="Durkin A.S."/>
            <person name="Huot H."/>
            <person name="Shrivastava S."/>
            <person name="Kothari S."/>
            <person name="Dodson R.J."/>
            <person name="Mohamoud Y."/>
            <person name="Khouri H."/>
            <person name="Roesch L.F.W."/>
            <person name="Krogfelt K.A."/>
            <person name="Struve C."/>
            <person name="Triplett E.W."/>
            <person name="Methe B.A."/>
        </authorList>
    </citation>
    <scope>NUCLEOTIDE SEQUENCE [LARGE SCALE GENOMIC DNA]</scope>
    <source>
        <strain>342</strain>
    </source>
</reference>
<proteinExistence type="inferred from homology"/>
<name>MINC_KLEP3</name>